<name>PRIA_CHLMU</name>
<accession>Q9PLE5</accession>
<keyword id="KW-0067">ATP-binding</keyword>
<keyword id="KW-0235">DNA replication</keyword>
<keyword id="KW-0238">DNA-binding</keyword>
<keyword id="KW-0347">Helicase</keyword>
<keyword id="KW-0378">Hydrolase</keyword>
<keyword id="KW-0413">Isomerase</keyword>
<keyword id="KW-0479">Metal-binding</keyword>
<keyword id="KW-0547">Nucleotide-binding</keyword>
<keyword id="KW-0639">Primosome</keyword>
<keyword id="KW-0862">Zinc</keyword>
<proteinExistence type="inferred from homology"/>
<dbReference type="EC" id="5.6.2.4" evidence="1"/>
<dbReference type="EMBL" id="AE002160">
    <property type="protein sequence ID" value="AAF39035.1"/>
    <property type="molecule type" value="Genomic_DNA"/>
</dbReference>
<dbReference type="PIR" id="D81734">
    <property type="entry name" value="D81734"/>
</dbReference>
<dbReference type="RefSeq" id="WP_010229552.1">
    <property type="nucleotide sequence ID" value="NZ_CP063055.1"/>
</dbReference>
<dbReference type="SMR" id="Q9PLE5"/>
<dbReference type="GeneID" id="1245693"/>
<dbReference type="KEGG" id="cmu:TC_0159"/>
<dbReference type="eggNOG" id="COG1198">
    <property type="taxonomic scope" value="Bacteria"/>
</dbReference>
<dbReference type="HOGENOM" id="CLU_013353_3_1_0"/>
<dbReference type="OrthoDB" id="9759544at2"/>
<dbReference type="Proteomes" id="UP000000800">
    <property type="component" value="Chromosome"/>
</dbReference>
<dbReference type="GO" id="GO:1990077">
    <property type="term" value="C:primosome complex"/>
    <property type="evidence" value="ECO:0007669"/>
    <property type="project" value="UniProtKB-UniRule"/>
</dbReference>
<dbReference type="GO" id="GO:0043138">
    <property type="term" value="F:3'-5' DNA helicase activity"/>
    <property type="evidence" value="ECO:0007669"/>
    <property type="project" value="TreeGrafter"/>
</dbReference>
<dbReference type="GO" id="GO:0005524">
    <property type="term" value="F:ATP binding"/>
    <property type="evidence" value="ECO:0007669"/>
    <property type="project" value="UniProtKB-UniRule"/>
</dbReference>
<dbReference type="GO" id="GO:0016887">
    <property type="term" value="F:ATP hydrolysis activity"/>
    <property type="evidence" value="ECO:0007669"/>
    <property type="project" value="RHEA"/>
</dbReference>
<dbReference type="GO" id="GO:0003677">
    <property type="term" value="F:DNA binding"/>
    <property type="evidence" value="ECO:0007669"/>
    <property type="project" value="UniProtKB-UniRule"/>
</dbReference>
<dbReference type="GO" id="GO:0008270">
    <property type="term" value="F:zinc ion binding"/>
    <property type="evidence" value="ECO:0007669"/>
    <property type="project" value="UniProtKB-UniRule"/>
</dbReference>
<dbReference type="GO" id="GO:0006310">
    <property type="term" value="P:DNA recombination"/>
    <property type="evidence" value="ECO:0007669"/>
    <property type="project" value="InterPro"/>
</dbReference>
<dbReference type="GO" id="GO:0006270">
    <property type="term" value="P:DNA replication initiation"/>
    <property type="evidence" value="ECO:0007669"/>
    <property type="project" value="TreeGrafter"/>
</dbReference>
<dbReference type="GO" id="GO:0006269">
    <property type="term" value="P:DNA replication, synthesis of primer"/>
    <property type="evidence" value="ECO:0007669"/>
    <property type="project" value="UniProtKB-KW"/>
</dbReference>
<dbReference type="GO" id="GO:0006302">
    <property type="term" value="P:double-strand break repair"/>
    <property type="evidence" value="ECO:0007669"/>
    <property type="project" value="InterPro"/>
</dbReference>
<dbReference type="CDD" id="cd17929">
    <property type="entry name" value="DEXHc_priA"/>
    <property type="match status" value="1"/>
</dbReference>
<dbReference type="CDD" id="cd18804">
    <property type="entry name" value="SF2_C_priA"/>
    <property type="match status" value="1"/>
</dbReference>
<dbReference type="FunFam" id="3.40.50.300:FF:000489">
    <property type="entry name" value="Primosome assembly protein PriA"/>
    <property type="match status" value="1"/>
</dbReference>
<dbReference type="Gene3D" id="3.40.50.300">
    <property type="entry name" value="P-loop containing nucleotide triphosphate hydrolases"/>
    <property type="match status" value="2"/>
</dbReference>
<dbReference type="Gene3D" id="3.40.1440.60">
    <property type="entry name" value="PriA, 3(prime) DNA-binding domain"/>
    <property type="match status" value="1"/>
</dbReference>
<dbReference type="HAMAP" id="MF_00983">
    <property type="entry name" value="PriA"/>
    <property type="match status" value="1"/>
</dbReference>
<dbReference type="InterPro" id="IPR011545">
    <property type="entry name" value="DEAD/DEAH_box_helicase_dom"/>
</dbReference>
<dbReference type="InterPro" id="IPR014001">
    <property type="entry name" value="Helicase_ATP-bd"/>
</dbReference>
<dbReference type="InterPro" id="IPR001650">
    <property type="entry name" value="Helicase_C-like"/>
</dbReference>
<dbReference type="InterPro" id="IPR027417">
    <property type="entry name" value="P-loop_NTPase"/>
</dbReference>
<dbReference type="InterPro" id="IPR005259">
    <property type="entry name" value="PriA"/>
</dbReference>
<dbReference type="InterPro" id="IPR041222">
    <property type="entry name" value="PriA_3primeBD"/>
</dbReference>
<dbReference type="InterPro" id="IPR042115">
    <property type="entry name" value="PriA_3primeBD_sf"/>
</dbReference>
<dbReference type="InterPro" id="IPR041236">
    <property type="entry name" value="PriA_C"/>
</dbReference>
<dbReference type="InterPro" id="IPR040498">
    <property type="entry name" value="PriA_CRR"/>
</dbReference>
<dbReference type="InterPro" id="IPR050880">
    <property type="entry name" value="PriA_helicase"/>
</dbReference>
<dbReference type="NCBIfam" id="TIGR00595">
    <property type="entry name" value="priA"/>
    <property type="match status" value="1"/>
</dbReference>
<dbReference type="NCBIfam" id="NF004066">
    <property type="entry name" value="PRK05580.1-3"/>
    <property type="match status" value="1"/>
</dbReference>
<dbReference type="PANTHER" id="PTHR30580">
    <property type="entry name" value="PRIMOSOMAL PROTEIN N"/>
    <property type="match status" value="1"/>
</dbReference>
<dbReference type="PANTHER" id="PTHR30580:SF0">
    <property type="entry name" value="PRIMOSOMAL PROTEIN N"/>
    <property type="match status" value="1"/>
</dbReference>
<dbReference type="Pfam" id="PF00270">
    <property type="entry name" value="DEAD"/>
    <property type="match status" value="1"/>
</dbReference>
<dbReference type="Pfam" id="PF00271">
    <property type="entry name" value="Helicase_C"/>
    <property type="match status" value="1"/>
</dbReference>
<dbReference type="Pfam" id="PF17764">
    <property type="entry name" value="PriA_3primeBD"/>
    <property type="match status" value="1"/>
</dbReference>
<dbReference type="Pfam" id="PF18074">
    <property type="entry name" value="PriA_C"/>
    <property type="match status" value="1"/>
</dbReference>
<dbReference type="Pfam" id="PF18319">
    <property type="entry name" value="Zn_ribbon_PriA"/>
    <property type="match status" value="1"/>
</dbReference>
<dbReference type="SMART" id="SM00487">
    <property type="entry name" value="DEXDc"/>
    <property type="match status" value="1"/>
</dbReference>
<dbReference type="SMART" id="SM00490">
    <property type="entry name" value="HELICc"/>
    <property type="match status" value="1"/>
</dbReference>
<dbReference type="SUPFAM" id="SSF52540">
    <property type="entry name" value="P-loop containing nucleoside triphosphate hydrolases"/>
    <property type="match status" value="2"/>
</dbReference>
<dbReference type="PROSITE" id="PS51192">
    <property type="entry name" value="HELICASE_ATP_BIND_1"/>
    <property type="match status" value="1"/>
</dbReference>
<dbReference type="PROSITE" id="PS51194">
    <property type="entry name" value="HELICASE_CTER"/>
    <property type="match status" value="1"/>
</dbReference>
<organism>
    <name type="scientific">Chlamydia muridarum (strain MoPn / Nigg)</name>
    <dbReference type="NCBI Taxonomy" id="243161"/>
    <lineage>
        <taxon>Bacteria</taxon>
        <taxon>Pseudomonadati</taxon>
        <taxon>Chlamydiota</taxon>
        <taxon>Chlamydiia</taxon>
        <taxon>Chlamydiales</taxon>
        <taxon>Chlamydiaceae</taxon>
        <taxon>Chlamydia/Chlamydophila group</taxon>
        <taxon>Chlamydia</taxon>
    </lineage>
</organism>
<reference key="1">
    <citation type="journal article" date="2000" name="Nucleic Acids Res.">
        <title>Genome sequences of Chlamydia trachomatis MoPn and Chlamydia pneumoniae AR39.</title>
        <authorList>
            <person name="Read T.D."/>
            <person name="Brunham R.C."/>
            <person name="Shen C."/>
            <person name="Gill S.R."/>
            <person name="Heidelberg J.F."/>
            <person name="White O."/>
            <person name="Hickey E.K."/>
            <person name="Peterson J.D."/>
            <person name="Utterback T.R."/>
            <person name="Berry K.J."/>
            <person name="Bass S."/>
            <person name="Linher K.D."/>
            <person name="Weidman J.F."/>
            <person name="Khouri H.M."/>
            <person name="Craven B."/>
            <person name="Bowman C."/>
            <person name="Dodson R.J."/>
            <person name="Gwinn M.L."/>
            <person name="Nelson W.C."/>
            <person name="DeBoy R.T."/>
            <person name="Kolonay J.F."/>
            <person name="McClarty G."/>
            <person name="Salzberg S.L."/>
            <person name="Eisen J.A."/>
            <person name="Fraser C.M."/>
        </authorList>
    </citation>
    <scope>NUCLEOTIDE SEQUENCE [LARGE SCALE GENOMIC DNA]</scope>
    <source>
        <strain>MoPn / Nigg</strain>
    </source>
</reference>
<evidence type="ECO:0000255" key="1">
    <source>
        <dbReference type="HAMAP-Rule" id="MF_00983"/>
    </source>
</evidence>
<feature type="chain" id="PRO_0000102120" description="Replication restart protein PriA">
    <location>
        <begin position="1"/>
        <end position="753"/>
    </location>
</feature>
<feature type="domain" description="Helicase ATP-binding" evidence="1">
    <location>
        <begin position="228"/>
        <end position="395"/>
    </location>
</feature>
<feature type="domain" description="Helicase C-terminal" evidence="1">
    <location>
        <begin position="491"/>
        <end position="646"/>
    </location>
</feature>
<feature type="short sequence motif" description="DEAH box" evidence="1">
    <location>
        <begin position="337"/>
        <end position="340"/>
    </location>
</feature>
<feature type="binding site" evidence="1">
    <location>
        <begin position="241"/>
        <end position="248"/>
    </location>
    <ligand>
        <name>ATP</name>
        <dbReference type="ChEBI" id="CHEBI:30616"/>
    </ligand>
</feature>
<feature type="binding site" evidence="1">
    <location>
        <position position="458"/>
    </location>
    <ligand>
        <name>Zn(2+)</name>
        <dbReference type="ChEBI" id="CHEBI:29105"/>
        <label>1</label>
    </ligand>
</feature>
<feature type="binding site" evidence="1">
    <location>
        <position position="461"/>
    </location>
    <ligand>
        <name>Zn(2+)</name>
        <dbReference type="ChEBI" id="CHEBI:29105"/>
        <label>1</label>
    </ligand>
</feature>
<feature type="binding site" evidence="1">
    <location>
        <position position="467"/>
    </location>
    <ligand>
        <name>Zn(2+)</name>
        <dbReference type="ChEBI" id="CHEBI:29105"/>
        <label>2</label>
    </ligand>
</feature>
<feature type="binding site" evidence="1">
    <location>
        <position position="470"/>
    </location>
    <ligand>
        <name>Zn(2+)</name>
        <dbReference type="ChEBI" id="CHEBI:29105"/>
        <label>2</label>
    </ligand>
</feature>
<feature type="binding site" evidence="1">
    <location>
        <position position="485"/>
    </location>
    <ligand>
        <name>Zn(2+)</name>
        <dbReference type="ChEBI" id="CHEBI:29105"/>
        <label>2</label>
    </ligand>
</feature>
<feature type="binding site" evidence="1">
    <location>
        <position position="488"/>
    </location>
    <ligand>
        <name>Zn(2+)</name>
        <dbReference type="ChEBI" id="CHEBI:29105"/>
        <label>2</label>
    </ligand>
</feature>
<feature type="binding site" evidence="1">
    <location>
        <position position="499"/>
    </location>
    <ligand>
        <name>Zn(2+)</name>
        <dbReference type="ChEBI" id="CHEBI:29105"/>
        <label>1</label>
    </ligand>
</feature>
<feature type="binding site" evidence="1">
    <location>
        <position position="502"/>
    </location>
    <ligand>
        <name>Zn(2+)</name>
        <dbReference type="ChEBI" id="CHEBI:29105"/>
        <label>1</label>
    </ligand>
</feature>
<protein>
    <recommendedName>
        <fullName evidence="1">Replication restart protein PriA</fullName>
    </recommendedName>
    <alternativeName>
        <fullName evidence="1">ATP-dependent DNA helicase PriA</fullName>
        <ecNumber evidence="1">5.6.2.4</ecNumber>
    </alternativeName>
    <alternativeName>
        <fullName evidence="1">DNA 3'-5' helicase PriA</fullName>
    </alternativeName>
</protein>
<gene>
    <name evidence="1" type="primary">priA</name>
    <name type="ordered locus">TC_0159</name>
</gene>
<comment type="function">
    <text evidence="1">Initiates the restart of stalled replication forks, which reloads the replicative helicase on sites other than the origin of replication. Recognizes and binds to abandoned replication forks and remodels them to uncover a helicase loading site. Promotes assembly of the primosome at these replication forks.</text>
</comment>
<comment type="catalytic activity">
    <reaction evidence="1">
        <text>Couples ATP hydrolysis with the unwinding of duplex DNA by translocating in the 3'-5' direction.</text>
        <dbReference type="EC" id="5.6.2.4"/>
    </reaction>
</comment>
<comment type="catalytic activity">
    <reaction evidence="1">
        <text>ATP + H2O = ADP + phosphate + H(+)</text>
        <dbReference type="Rhea" id="RHEA:13065"/>
        <dbReference type="ChEBI" id="CHEBI:15377"/>
        <dbReference type="ChEBI" id="CHEBI:15378"/>
        <dbReference type="ChEBI" id="CHEBI:30616"/>
        <dbReference type="ChEBI" id="CHEBI:43474"/>
        <dbReference type="ChEBI" id="CHEBI:456216"/>
        <dbReference type="EC" id="5.6.2.4"/>
    </reaction>
</comment>
<comment type="cofactor">
    <cofactor evidence="1">
        <name>Zn(2+)</name>
        <dbReference type="ChEBI" id="CHEBI:29105"/>
    </cofactor>
    <text evidence="1">Binds 2 zinc ions per subunit.</text>
</comment>
<comment type="subunit">
    <text evidence="1">Component of the replication restart primosome.</text>
</comment>
<comment type="similarity">
    <text evidence="1">Belongs to the helicase family. PriA subfamily.</text>
</comment>
<sequence>MDPTHQSFRLYAEVLVSANINKILDYGIPAELEDRVTIGSVVKVPLQRKVTNDKYKFAIVLKIKDSSDFANVIQPIAGISYEGVTLPKDLIDLIFWISQYYFCPLGSTLSLFLPTVYSQTHSTKHQNNVFLGQNAERTQEIIKSIEDPHQIAVLRKLLKTTKPLTPKELIKKTDISTKILDSLSKQGFIRIVDSANLEIQDEQLQYFLPEPPTLTQEQIEAINTISQSLITTKFQTCLLFGVTGSGKTEVYLQVIRKARSLGKSVILLVPEVALTIQTLSFFKMHFGAEVGVLHYKLSESERTQTWHKAARGLINIIIGPRSAIFCPMQNLGLIIVDEEHDGAYKQSDLPPFYQARDVAVMRGKFTNATVILGSATPSLESYTNALSKKYTLSVLSKRASTSIPTKVSLIDMNREMEKTRKKILFSPTVIRSIEQRLAVGEQTIIFFNRRGFHTNVSCSSCKYTLKCPHCDMILTFHKTERILLCHLCNTRLSKPITSCPQCHGTMTLQYRGAGTEKIEALLQDFFPTVRTIRLDSDTTRYRGSHDALIKQFATGKADILIGTQMIAKGMHFPAVTLSVVLSGDSGLYIPDFRAAEQVFQLITQVTGRSGRSYLPGEVLIQTFLPQNSTISHALAQDFPAFYKEEILGRKACNYPPFTRLIRCIFLGKCAEYTLQEAQRMHELIKQNLDAQASLMDISPCGHFKVKDLFHYQFLIKTRNILTVNKQLQDAFSAAKLSSKVRCIVDIDPITTFF</sequence>